<keyword id="KW-0963">Cytoplasm</keyword>
<keyword id="KW-0255">Endonuclease</keyword>
<keyword id="KW-0378">Hydrolase</keyword>
<keyword id="KW-0479">Metal-binding</keyword>
<keyword id="KW-0540">Nuclease</keyword>
<keyword id="KW-0690">Ribosome biogenesis</keyword>
<keyword id="KW-0698">rRNA processing</keyword>
<keyword id="KW-0862">Zinc</keyword>
<accession>A8EZU1</accession>
<gene>
    <name evidence="1" type="primary">ybeY</name>
    <name type="ordered locus">A1E_04765</name>
</gene>
<proteinExistence type="inferred from homology"/>
<dbReference type="EC" id="3.1.-.-" evidence="1"/>
<dbReference type="EMBL" id="CP000409">
    <property type="protein sequence ID" value="ABV73874.1"/>
    <property type="molecule type" value="Genomic_DNA"/>
</dbReference>
<dbReference type="RefSeq" id="WP_012149069.1">
    <property type="nucleotide sequence ID" value="NC_009879.1"/>
</dbReference>
<dbReference type="SMR" id="A8EZU1"/>
<dbReference type="STRING" id="293613.A1E_04765"/>
<dbReference type="KEGG" id="rcm:A1E_04765"/>
<dbReference type="eggNOG" id="COG0319">
    <property type="taxonomic scope" value="Bacteria"/>
</dbReference>
<dbReference type="HOGENOM" id="CLU_106710_0_0_5"/>
<dbReference type="Proteomes" id="UP000007056">
    <property type="component" value="Chromosome"/>
</dbReference>
<dbReference type="GO" id="GO:0005737">
    <property type="term" value="C:cytoplasm"/>
    <property type="evidence" value="ECO:0007669"/>
    <property type="project" value="UniProtKB-SubCell"/>
</dbReference>
<dbReference type="GO" id="GO:0004222">
    <property type="term" value="F:metalloendopeptidase activity"/>
    <property type="evidence" value="ECO:0007669"/>
    <property type="project" value="InterPro"/>
</dbReference>
<dbReference type="GO" id="GO:0004521">
    <property type="term" value="F:RNA endonuclease activity"/>
    <property type="evidence" value="ECO:0007669"/>
    <property type="project" value="UniProtKB-UniRule"/>
</dbReference>
<dbReference type="GO" id="GO:0008270">
    <property type="term" value="F:zinc ion binding"/>
    <property type="evidence" value="ECO:0007669"/>
    <property type="project" value="UniProtKB-UniRule"/>
</dbReference>
<dbReference type="GO" id="GO:0006364">
    <property type="term" value="P:rRNA processing"/>
    <property type="evidence" value="ECO:0007669"/>
    <property type="project" value="UniProtKB-UniRule"/>
</dbReference>
<dbReference type="Gene3D" id="3.40.390.30">
    <property type="entry name" value="Metalloproteases ('zincins'), catalytic domain"/>
    <property type="match status" value="1"/>
</dbReference>
<dbReference type="HAMAP" id="MF_00009">
    <property type="entry name" value="Endoribonucl_YbeY"/>
    <property type="match status" value="1"/>
</dbReference>
<dbReference type="InterPro" id="IPR023091">
    <property type="entry name" value="MetalPrtase_cat_dom_sf_prd"/>
</dbReference>
<dbReference type="InterPro" id="IPR002036">
    <property type="entry name" value="YbeY"/>
</dbReference>
<dbReference type="InterPro" id="IPR020549">
    <property type="entry name" value="YbeY_CS"/>
</dbReference>
<dbReference type="NCBIfam" id="TIGR00043">
    <property type="entry name" value="rRNA maturation RNase YbeY"/>
    <property type="match status" value="1"/>
</dbReference>
<dbReference type="PANTHER" id="PTHR46986">
    <property type="entry name" value="ENDORIBONUCLEASE YBEY, CHLOROPLASTIC"/>
    <property type="match status" value="1"/>
</dbReference>
<dbReference type="PANTHER" id="PTHR46986:SF1">
    <property type="entry name" value="ENDORIBONUCLEASE YBEY, CHLOROPLASTIC"/>
    <property type="match status" value="1"/>
</dbReference>
<dbReference type="Pfam" id="PF02130">
    <property type="entry name" value="YbeY"/>
    <property type="match status" value="1"/>
</dbReference>
<dbReference type="SUPFAM" id="SSF55486">
    <property type="entry name" value="Metalloproteases ('zincins'), catalytic domain"/>
    <property type="match status" value="1"/>
</dbReference>
<dbReference type="PROSITE" id="PS01306">
    <property type="entry name" value="UPF0054"/>
    <property type="match status" value="1"/>
</dbReference>
<reference key="1">
    <citation type="submission" date="2007-09" db="EMBL/GenBank/DDBJ databases">
        <title>Complete genome sequence of Rickettsia canadensis.</title>
        <authorList>
            <person name="Madan A."/>
            <person name="Fahey J."/>
            <person name="Helton E."/>
            <person name="Ketteman M."/>
            <person name="Madan A."/>
            <person name="Rodrigues S."/>
            <person name="Sanchez A."/>
            <person name="Whiting M."/>
            <person name="Dasch G."/>
            <person name="Eremeeva M."/>
        </authorList>
    </citation>
    <scope>NUCLEOTIDE SEQUENCE [LARGE SCALE GENOMIC DNA]</scope>
    <source>
        <strain>McKiel</strain>
    </source>
</reference>
<organism>
    <name type="scientific">Rickettsia canadensis (strain McKiel)</name>
    <dbReference type="NCBI Taxonomy" id="293613"/>
    <lineage>
        <taxon>Bacteria</taxon>
        <taxon>Pseudomonadati</taxon>
        <taxon>Pseudomonadota</taxon>
        <taxon>Alphaproteobacteria</taxon>
        <taxon>Rickettsiales</taxon>
        <taxon>Rickettsiaceae</taxon>
        <taxon>Rickettsieae</taxon>
        <taxon>Rickettsia</taxon>
        <taxon>belli group</taxon>
    </lineage>
</organism>
<sequence length="172" mass="20300">MINVEIIRNYDKWREHKQINKALIKKVTQNVLLRFDNFSKIKQFELSILLTNTAEILTLNKQFRNIDKATNVLSFPSNKLNWQDLCFSNVSPKLELLIGYDYMHLGDIAFCYEVIYNESYEQQKTSENHFIHLLIHSILHLIGFDHQNDTEANIMENLEIEILSYFGIASPY</sequence>
<feature type="chain" id="PRO_1000000738" description="Endoribonuclease YbeY">
    <location>
        <begin position="1"/>
        <end position="172"/>
    </location>
</feature>
<feature type="binding site" evidence="1">
    <location>
        <position position="136"/>
    </location>
    <ligand>
        <name>Zn(2+)</name>
        <dbReference type="ChEBI" id="CHEBI:29105"/>
        <note>catalytic</note>
    </ligand>
</feature>
<feature type="binding site" evidence="1">
    <location>
        <position position="140"/>
    </location>
    <ligand>
        <name>Zn(2+)</name>
        <dbReference type="ChEBI" id="CHEBI:29105"/>
        <note>catalytic</note>
    </ligand>
</feature>
<feature type="binding site" evidence="1">
    <location>
        <position position="146"/>
    </location>
    <ligand>
        <name>Zn(2+)</name>
        <dbReference type="ChEBI" id="CHEBI:29105"/>
        <note>catalytic</note>
    </ligand>
</feature>
<evidence type="ECO:0000255" key="1">
    <source>
        <dbReference type="HAMAP-Rule" id="MF_00009"/>
    </source>
</evidence>
<name>YBEY_RICCK</name>
<comment type="function">
    <text evidence="1">Single strand-specific metallo-endoribonuclease involved in late-stage 70S ribosome quality control and in maturation of the 3' terminus of the 16S rRNA.</text>
</comment>
<comment type="cofactor">
    <cofactor evidence="1">
        <name>Zn(2+)</name>
        <dbReference type="ChEBI" id="CHEBI:29105"/>
    </cofactor>
    <text evidence="1">Binds 1 zinc ion.</text>
</comment>
<comment type="subcellular location">
    <subcellularLocation>
        <location evidence="1">Cytoplasm</location>
    </subcellularLocation>
</comment>
<comment type="similarity">
    <text evidence="1">Belongs to the endoribonuclease YbeY family.</text>
</comment>
<protein>
    <recommendedName>
        <fullName evidence="1">Endoribonuclease YbeY</fullName>
        <ecNumber evidence="1">3.1.-.-</ecNumber>
    </recommendedName>
</protein>